<gene>
    <name evidence="1" type="primary">ispD</name>
    <name type="ordered locus">BP0865</name>
</gene>
<accession>Q7VZN2</accession>
<sequence>MSESLIAIVPAAGIGARASLPGEAAVPKQYRPLAGQPMLRHAVRALLADPRIVQVRVAVSAGDGWVEQALAGLPRTVWRPCGGPNRADTVAAALADSGAAADDWILVHDAARPGLPAAALARLIDACLDDAVGGLLALPVADTVKAGRQRVSRTVDRDGLWLAQTPQMFRAGLLRDALARARAAGLAVTDEASAVEAAGHAPRLVAGALRNFKVTWPDDFELMEKWL</sequence>
<dbReference type="EC" id="2.7.7.60" evidence="1"/>
<dbReference type="EMBL" id="BX640413">
    <property type="protein sequence ID" value="CAE41168.1"/>
    <property type="molecule type" value="Genomic_DNA"/>
</dbReference>
<dbReference type="RefSeq" id="NP_879675.1">
    <property type="nucleotide sequence ID" value="NC_002929.2"/>
</dbReference>
<dbReference type="RefSeq" id="WP_003813895.1">
    <property type="nucleotide sequence ID" value="NZ_CP039022.1"/>
</dbReference>
<dbReference type="SMR" id="Q7VZN2"/>
<dbReference type="STRING" id="257313.BP0865"/>
<dbReference type="PaxDb" id="257313-BP0865"/>
<dbReference type="GeneID" id="69600744"/>
<dbReference type="KEGG" id="bpe:BP0865"/>
<dbReference type="PATRIC" id="fig|257313.5.peg.920"/>
<dbReference type="eggNOG" id="COG1211">
    <property type="taxonomic scope" value="Bacteria"/>
</dbReference>
<dbReference type="HOGENOM" id="CLU_061281_3_0_4"/>
<dbReference type="UniPathway" id="UPA00056">
    <property type="reaction ID" value="UER00093"/>
</dbReference>
<dbReference type="Proteomes" id="UP000002676">
    <property type="component" value="Chromosome"/>
</dbReference>
<dbReference type="GO" id="GO:0050518">
    <property type="term" value="F:2-C-methyl-D-erythritol 4-phosphate cytidylyltransferase activity"/>
    <property type="evidence" value="ECO:0007669"/>
    <property type="project" value="UniProtKB-UniRule"/>
</dbReference>
<dbReference type="GO" id="GO:0019288">
    <property type="term" value="P:isopentenyl diphosphate biosynthetic process, methylerythritol 4-phosphate pathway"/>
    <property type="evidence" value="ECO:0007669"/>
    <property type="project" value="UniProtKB-UniRule"/>
</dbReference>
<dbReference type="CDD" id="cd02516">
    <property type="entry name" value="CDP-ME_synthetase"/>
    <property type="match status" value="1"/>
</dbReference>
<dbReference type="FunFam" id="3.90.550.10:FF:000003">
    <property type="entry name" value="2-C-methyl-D-erythritol 4-phosphate cytidylyltransferase"/>
    <property type="match status" value="1"/>
</dbReference>
<dbReference type="Gene3D" id="3.90.550.10">
    <property type="entry name" value="Spore Coat Polysaccharide Biosynthesis Protein SpsA, Chain A"/>
    <property type="match status" value="1"/>
</dbReference>
<dbReference type="HAMAP" id="MF_00108">
    <property type="entry name" value="IspD"/>
    <property type="match status" value="1"/>
</dbReference>
<dbReference type="InterPro" id="IPR001228">
    <property type="entry name" value="IspD"/>
</dbReference>
<dbReference type="InterPro" id="IPR034683">
    <property type="entry name" value="IspD/TarI"/>
</dbReference>
<dbReference type="InterPro" id="IPR050088">
    <property type="entry name" value="IspD/TarI_cytidylyltransf_bact"/>
</dbReference>
<dbReference type="InterPro" id="IPR018294">
    <property type="entry name" value="ISPD_synthase_CS"/>
</dbReference>
<dbReference type="InterPro" id="IPR029044">
    <property type="entry name" value="Nucleotide-diphossugar_trans"/>
</dbReference>
<dbReference type="NCBIfam" id="TIGR00453">
    <property type="entry name" value="ispD"/>
    <property type="match status" value="1"/>
</dbReference>
<dbReference type="PANTHER" id="PTHR32125">
    <property type="entry name" value="2-C-METHYL-D-ERYTHRITOL 4-PHOSPHATE CYTIDYLYLTRANSFERASE, CHLOROPLASTIC"/>
    <property type="match status" value="1"/>
</dbReference>
<dbReference type="PANTHER" id="PTHR32125:SF4">
    <property type="entry name" value="2-C-METHYL-D-ERYTHRITOL 4-PHOSPHATE CYTIDYLYLTRANSFERASE, CHLOROPLASTIC"/>
    <property type="match status" value="1"/>
</dbReference>
<dbReference type="Pfam" id="PF01128">
    <property type="entry name" value="IspD"/>
    <property type="match status" value="1"/>
</dbReference>
<dbReference type="SUPFAM" id="SSF53448">
    <property type="entry name" value="Nucleotide-diphospho-sugar transferases"/>
    <property type="match status" value="1"/>
</dbReference>
<dbReference type="PROSITE" id="PS01295">
    <property type="entry name" value="ISPD"/>
    <property type="match status" value="1"/>
</dbReference>
<comment type="function">
    <text evidence="1">Catalyzes the formation of 4-diphosphocytidyl-2-C-methyl-D-erythritol from CTP and 2-C-methyl-D-erythritol 4-phosphate (MEP).</text>
</comment>
<comment type="catalytic activity">
    <reaction evidence="1">
        <text>2-C-methyl-D-erythritol 4-phosphate + CTP + H(+) = 4-CDP-2-C-methyl-D-erythritol + diphosphate</text>
        <dbReference type="Rhea" id="RHEA:13429"/>
        <dbReference type="ChEBI" id="CHEBI:15378"/>
        <dbReference type="ChEBI" id="CHEBI:33019"/>
        <dbReference type="ChEBI" id="CHEBI:37563"/>
        <dbReference type="ChEBI" id="CHEBI:57823"/>
        <dbReference type="ChEBI" id="CHEBI:58262"/>
        <dbReference type="EC" id="2.7.7.60"/>
    </reaction>
</comment>
<comment type="pathway">
    <text evidence="1">Isoprenoid biosynthesis; isopentenyl diphosphate biosynthesis via DXP pathway; isopentenyl diphosphate from 1-deoxy-D-xylulose 5-phosphate: step 2/6.</text>
</comment>
<comment type="similarity">
    <text evidence="1">Belongs to the IspD/TarI cytidylyltransferase family. IspD subfamily.</text>
</comment>
<reference key="1">
    <citation type="journal article" date="2003" name="Nat. Genet.">
        <title>Comparative analysis of the genome sequences of Bordetella pertussis, Bordetella parapertussis and Bordetella bronchiseptica.</title>
        <authorList>
            <person name="Parkhill J."/>
            <person name="Sebaihia M."/>
            <person name="Preston A."/>
            <person name="Murphy L.D."/>
            <person name="Thomson N.R."/>
            <person name="Harris D.E."/>
            <person name="Holden M.T.G."/>
            <person name="Churcher C.M."/>
            <person name="Bentley S.D."/>
            <person name="Mungall K.L."/>
            <person name="Cerdeno-Tarraga A.-M."/>
            <person name="Temple L."/>
            <person name="James K.D."/>
            <person name="Harris B."/>
            <person name="Quail M.A."/>
            <person name="Achtman M."/>
            <person name="Atkin R."/>
            <person name="Baker S."/>
            <person name="Basham D."/>
            <person name="Bason N."/>
            <person name="Cherevach I."/>
            <person name="Chillingworth T."/>
            <person name="Collins M."/>
            <person name="Cronin A."/>
            <person name="Davis P."/>
            <person name="Doggett J."/>
            <person name="Feltwell T."/>
            <person name="Goble A."/>
            <person name="Hamlin N."/>
            <person name="Hauser H."/>
            <person name="Holroyd S."/>
            <person name="Jagels K."/>
            <person name="Leather S."/>
            <person name="Moule S."/>
            <person name="Norberczak H."/>
            <person name="O'Neil S."/>
            <person name="Ormond D."/>
            <person name="Price C."/>
            <person name="Rabbinowitsch E."/>
            <person name="Rutter S."/>
            <person name="Sanders M."/>
            <person name="Saunders D."/>
            <person name="Seeger K."/>
            <person name="Sharp S."/>
            <person name="Simmonds M."/>
            <person name="Skelton J."/>
            <person name="Squares R."/>
            <person name="Squares S."/>
            <person name="Stevens K."/>
            <person name="Unwin L."/>
            <person name="Whitehead S."/>
            <person name="Barrell B.G."/>
            <person name="Maskell D.J."/>
        </authorList>
    </citation>
    <scope>NUCLEOTIDE SEQUENCE [LARGE SCALE GENOMIC DNA]</scope>
    <source>
        <strain>Tohama I / ATCC BAA-589 / NCTC 13251</strain>
    </source>
</reference>
<proteinExistence type="inferred from homology"/>
<name>ISPD_BORPE</name>
<protein>
    <recommendedName>
        <fullName evidence="1">2-C-methyl-D-erythritol 4-phosphate cytidylyltransferase</fullName>
        <ecNumber evidence="1">2.7.7.60</ecNumber>
    </recommendedName>
    <alternativeName>
        <fullName evidence="1">4-diphosphocytidyl-2C-methyl-D-erythritol synthase</fullName>
    </alternativeName>
    <alternativeName>
        <fullName evidence="1">MEP cytidylyltransferase</fullName>
        <shortName evidence="1">MCT</shortName>
    </alternativeName>
</protein>
<evidence type="ECO:0000255" key="1">
    <source>
        <dbReference type="HAMAP-Rule" id="MF_00108"/>
    </source>
</evidence>
<keyword id="KW-0414">Isoprene biosynthesis</keyword>
<keyword id="KW-0548">Nucleotidyltransferase</keyword>
<keyword id="KW-1185">Reference proteome</keyword>
<keyword id="KW-0808">Transferase</keyword>
<organism>
    <name type="scientific">Bordetella pertussis (strain Tohama I / ATCC BAA-589 / NCTC 13251)</name>
    <dbReference type="NCBI Taxonomy" id="257313"/>
    <lineage>
        <taxon>Bacteria</taxon>
        <taxon>Pseudomonadati</taxon>
        <taxon>Pseudomonadota</taxon>
        <taxon>Betaproteobacteria</taxon>
        <taxon>Burkholderiales</taxon>
        <taxon>Alcaligenaceae</taxon>
        <taxon>Bordetella</taxon>
    </lineage>
</organism>
<feature type="chain" id="PRO_0000075556" description="2-C-methyl-D-erythritol 4-phosphate cytidylyltransferase">
    <location>
        <begin position="1"/>
        <end position="227"/>
    </location>
</feature>
<feature type="site" description="Transition state stabilizer" evidence="1">
    <location>
        <position position="17"/>
    </location>
</feature>
<feature type="site" description="Transition state stabilizer" evidence="1">
    <location>
        <position position="28"/>
    </location>
</feature>
<feature type="site" description="Positions MEP for the nucleophilic attack" evidence="1">
    <location>
        <position position="157"/>
    </location>
</feature>
<feature type="site" description="Positions MEP for the nucleophilic attack" evidence="1">
    <location>
        <position position="213"/>
    </location>
</feature>